<accession>Q9Q8X0</accession>
<feature type="chain" id="PRO_0000102188" description="Transcript termination protein A18">
    <location>
        <begin position="1"/>
        <end position="478"/>
    </location>
</feature>
<feature type="domain" description="Helicase ATP-binding" evidence="2">
    <location>
        <begin position="98"/>
        <end position="254"/>
    </location>
</feature>
<feature type="domain" description="Helicase C-terminal" evidence="3">
    <location>
        <begin position="302"/>
        <end position="468"/>
    </location>
</feature>
<feature type="short sequence motif" description="DESH box">
    <location>
        <begin position="204"/>
        <end position="207"/>
    </location>
</feature>
<feature type="binding site" evidence="2">
    <location>
        <begin position="111"/>
        <end position="118"/>
    </location>
    <ligand>
        <name>ATP</name>
        <dbReference type="ChEBI" id="CHEBI:30616"/>
    </ligand>
</feature>
<reference key="1">
    <citation type="journal article" date="1999" name="Virology">
        <title>The complete genome sequence of shope (Rabbit) fibroma virus.</title>
        <authorList>
            <person name="Willer D.O."/>
            <person name="McFadden G."/>
            <person name="Evans D.H."/>
        </authorList>
    </citation>
    <scope>NUCLEOTIDE SEQUENCE [LARGE SCALE GENOMIC DNA]</scope>
</reference>
<proteinExistence type="inferred from homology"/>
<evidence type="ECO:0000250" key="1"/>
<evidence type="ECO:0000255" key="2">
    <source>
        <dbReference type="PROSITE-ProRule" id="PRU00541"/>
    </source>
</evidence>
<evidence type="ECO:0000255" key="3">
    <source>
        <dbReference type="PROSITE-ProRule" id="PRU00542"/>
    </source>
</evidence>
<evidence type="ECO:0000305" key="4"/>
<gene>
    <name type="ordered locus">s108R</name>
</gene>
<dbReference type="EC" id="3.6.4.-"/>
<dbReference type="EMBL" id="AF170722">
    <property type="protein sequence ID" value="AAF17991.1"/>
    <property type="molecule type" value="Genomic_DNA"/>
</dbReference>
<dbReference type="RefSeq" id="NP_051997.1">
    <property type="nucleotide sequence ID" value="NC_001266.1"/>
</dbReference>
<dbReference type="KEGG" id="vg:1486952"/>
<dbReference type="Proteomes" id="UP000000868">
    <property type="component" value="Segment"/>
</dbReference>
<dbReference type="GO" id="GO:0044423">
    <property type="term" value="C:virion component"/>
    <property type="evidence" value="ECO:0007669"/>
    <property type="project" value="UniProtKB-KW"/>
</dbReference>
<dbReference type="GO" id="GO:0005524">
    <property type="term" value="F:ATP binding"/>
    <property type="evidence" value="ECO:0007669"/>
    <property type="project" value="UniProtKB-KW"/>
</dbReference>
<dbReference type="GO" id="GO:0003677">
    <property type="term" value="F:DNA binding"/>
    <property type="evidence" value="ECO:0007669"/>
    <property type="project" value="UniProtKB-KW"/>
</dbReference>
<dbReference type="GO" id="GO:0004386">
    <property type="term" value="F:helicase activity"/>
    <property type="evidence" value="ECO:0007669"/>
    <property type="project" value="UniProtKB-KW"/>
</dbReference>
<dbReference type="GO" id="GO:0016787">
    <property type="term" value="F:hydrolase activity"/>
    <property type="evidence" value="ECO:0007669"/>
    <property type="project" value="UniProtKB-KW"/>
</dbReference>
<dbReference type="CDD" id="cd18785">
    <property type="entry name" value="SF2_C"/>
    <property type="match status" value="1"/>
</dbReference>
<dbReference type="Gene3D" id="3.40.50.300">
    <property type="entry name" value="P-loop containing nucleotide triphosphate hydrolases"/>
    <property type="match status" value="2"/>
</dbReference>
<dbReference type="InterPro" id="IPR006935">
    <property type="entry name" value="Helicase/UvrB_N"/>
</dbReference>
<dbReference type="InterPro" id="IPR014001">
    <property type="entry name" value="Helicase_ATP-bd"/>
</dbReference>
<dbReference type="InterPro" id="IPR001650">
    <property type="entry name" value="Helicase_C-like"/>
</dbReference>
<dbReference type="InterPro" id="IPR027417">
    <property type="entry name" value="P-loop_NTPase"/>
</dbReference>
<dbReference type="Pfam" id="PF00271">
    <property type="entry name" value="Helicase_C"/>
    <property type="match status" value="1"/>
</dbReference>
<dbReference type="Pfam" id="PF04851">
    <property type="entry name" value="ResIII"/>
    <property type="match status" value="1"/>
</dbReference>
<dbReference type="SMART" id="SM00487">
    <property type="entry name" value="DEXDc"/>
    <property type="match status" value="1"/>
</dbReference>
<dbReference type="SUPFAM" id="SSF52540">
    <property type="entry name" value="P-loop containing nucleoside triphosphate hydrolases"/>
    <property type="match status" value="1"/>
</dbReference>
<dbReference type="PROSITE" id="PS51192">
    <property type="entry name" value="HELICASE_ATP_BIND_1"/>
    <property type="match status" value="1"/>
</dbReference>
<dbReference type="PROSITE" id="PS51194">
    <property type="entry name" value="HELICASE_CTER"/>
    <property type="match status" value="1"/>
</dbReference>
<sequence>MSVCLEVDYTLYTELKKFLNGQPLFLFNADKNYVEVVPSSTLKFYIPIGLFSNSNVALIRPVHTTCTNHIESVDVTFPNLYPLQKHVVAEVTTSMRQKLSTHRPMYMTLHLSCGFGKTVTACYLMVVHRRKTVICVPNKMLIHQWKVAVELTKLSYIISTDGVSMLLKQLRTKTADVLIIVSRHLSNDYFCKKIHDEYDTFILDESHMYNLMNNSALTKFLTFYPPRICYFLTATPRLMNRIYCNDVVNVLKVSALTKRLKIVEYFFEPYSTDCIRQMAKHLNTENNKYHIYTEKILTEDLPRNNLIVETVSREFRNETIERVIVIVKLRKHMTFFYDRFVKEFGTDYVYLGDAKNKDTSTVVKSLLQKKKFIFVSTSHYSGTGLDIPSLDSLVICCAVLNSMQIEQLLGRVCRESESVKKTVFLFPNTSIREIKHSLGFFTERIVSISTDKLGFEQEGIEGTKEEPVLTKAFSSQTR</sequence>
<comment type="function">
    <text evidence="1">DNA helicase which seems to act as a postreplicative transcription termination factor. Involved in ATP-dependent release of nascent RNA. Forms a stable complex with single-stranded DNA, and to a lesser extent RNA (By similarity).</text>
</comment>
<comment type="subunit">
    <text evidence="1">Interacts with G2. Might be part of a transcription complex composed at least of G2, A18, and H5.</text>
</comment>
<comment type="subcellular location">
    <subcellularLocation>
        <location evidence="1">Virion</location>
    </subcellularLocation>
    <text evidence="1">Localizes to the virion core.</text>
</comment>
<comment type="similarity">
    <text evidence="4">Belongs to the helicase family. Poxviruses subfamily.</text>
</comment>
<keyword id="KW-0067">ATP-binding</keyword>
<keyword id="KW-0238">DNA-binding</keyword>
<keyword id="KW-0347">Helicase</keyword>
<keyword id="KW-0378">Hydrolase</keyword>
<keyword id="KW-0426">Late protein</keyword>
<keyword id="KW-0547">Nucleotide-binding</keyword>
<keyword id="KW-1185">Reference proteome</keyword>
<keyword id="KW-0804">Transcription</keyword>
<keyword id="KW-0946">Virion</keyword>
<name>A18_RFVKA</name>
<protein>
    <recommendedName>
        <fullName>Transcript termination protein A18</fullName>
        <ecNumber>3.6.4.-</ecNumber>
    </recommendedName>
</protein>
<organism>
    <name type="scientific">Rabbit fibroma virus (strain Kasza)</name>
    <name type="common">RFV</name>
    <name type="synonym">Shope fibroma virus (strain Kasza)</name>
    <dbReference type="NCBI Taxonomy" id="10272"/>
    <lineage>
        <taxon>Viruses</taxon>
        <taxon>Varidnaviria</taxon>
        <taxon>Bamfordvirae</taxon>
        <taxon>Nucleocytoviricota</taxon>
        <taxon>Pokkesviricetes</taxon>
        <taxon>Chitovirales</taxon>
        <taxon>Poxviridae</taxon>
        <taxon>Chordopoxvirinae</taxon>
        <taxon>Leporipoxvirus</taxon>
        <taxon>Rabbit fibroma virus</taxon>
    </lineage>
</organism>
<organismHost>
    <name type="scientific">Oryctolagus cuniculus</name>
    <name type="common">Rabbit</name>
    <dbReference type="NCBI Taxonomy" id="9986"/>
</organismHost>